<protein>
    <recommendedName>
        <fullName>Protein phosphatase 1 regulatory subunit 14C</fullName>
    </recommendedName>
    <alternativeName>
        <fullName>Kinase-enhanced PP1 inhibitor</fullName>
    </alternativeName>
    <alternativeName>
        <fullName>PKC-potentiated PP1 inhibitory protein</fullName>
    </alternativeName>
</protein>
<proteinExistence type="evidence at protein level"/>
<name>PP14C_MOUSE</name>
<gene>
    <name type="primary">Ppp1r14c</name>
    <name type="synonym">Kepi</name>
</gene>
<reference key="1">
    <citation type="journal article" date="2002" name="J. Biol. Chem.">
        <title>KEPI, a PKC-dependent protein phosphatase 1 inhibitor regulated by morphine.</title>
        <authorList>
            <person name="Liu Q.-R."/>
            <person name="Zhang P.-W."/>
            <person name="Zhen Q."/>
            <person name="Walther D."/>
            <person name="Wang X.-B."/>
            <person name="Uhl G."/>
        </authorList>
    </citation>
    <scope>NUCLEOTIDE SEQUENCE [MRNA]</scope>
    <scope>FUNCTION</scope>
    <scope>PHOSPHORYLATION</scope>
    <scope>SUBCELLULAR LOCATION</scope>
    <scope>TISSUE SPECIFICITY</scope>
    <scope>INDUCTION</scope>
    <source>
        <strain>C57BL/6J</strain>
        <tissue>Brain</tissue>
    </source>
</reference>
<reference key="2">
    <citation type="journal article" date="2005" name="Science">
        <title>The transcriptional landscape of the mammalian genome.</title>
        <authorList>
            <person name="Carninci P."/>
            <person name="Kasukawa T."/>
            <person name="Katayama S."/>
            <person name="Gough J."/>
            <person name="Frith M.C."/>
            <person name="Maeda N."/>
            <person name="Oyama R."/>
            <person name="Ravasi T."/>
            <person name="Lenhard B."/>
            <person name="Wells C."/>
            <person name="Kodzius R."/>
            <person name="Shimokawa K."/>
            <person name="Bajic V.B."/>
            <person name="Brenner S.E."/>
            <person name="Batalov S."/>
            <person name="Forrest A.R."/>
            <person name="Zavolan M."/>
            <person name="Davis M.J."/>
            <person name="Wilming L.G."/>
            <person name="Aidinis V."/>
            <person name="Allen J.E."/>
            <person name="Ambesi-Impiombato A."/>
            <person name="Apweiler R."/>
            <person name="Aturaliya R.N."/>
            <person name="Bailey T.L."/>
            <person name="Bansal M."/>
            <person name="Baxter L."/>
            <person name="Beisel K.W."/>
            <person name="Bersano T."/>
            <person name="Bono H."/>
            <person name="Chalk A.M."/>
            <person name="Chiu K.P."/>
            <person name="Choudhary V."/>
            <person name="Christoffels A."/>
            <person name="Clutterbuck D.R."/>
            <person name="Crowe M.L."/>
            <person name="Dalla E."/>
            <person name="Dalrymple B.P."/>
            <person name="de Bono B."/>
            <person name="Della Gatta G."/>
            <person name="di Bernardo D."/>
            <person name="Down T."/>
            <person name="Engstrom P."/>
            <person name="Fagiolini M."/>
            <person name="Faulkner G."/>
            <person name="Fletcher C.F."/>
            <person name="Fukushima T."/>
            <person name="Furuno M."/>
            <person name="Futaki S."/>
            <person name="Gariboldi M."/>
            <person name="Georgii-Hemming P."/>
            <person name="Gingeras T.R."/>
            <person name="Gojobori T."/>
            <person name="Green R.E."/>
            <person name="Gustincich S."/>
            <person name="Harbers M."/>
            <person name="Hayashi Y."/>
            <person name="Hensch T.K."/>
            <person name="Hirokawa N."/>
            <person name="Hill D."/>
            <person name="Huminiecki L."/>
            <person name="Iacono M."/>
            <person name="Ikeo K."/>
            <person name="Iwama A."/>
            <person name="Ishikawa T."/>
            <person name="Jakt M."/>
            <person name="Kanapin A."/>
            <person name="Katoh M."/>
            <person name="Kawasawa Y."/>
            <person name="Kelso J."/>
            <person name="Kitamura H."/>
            <person name="Kitano H."/>
            <person name="Kollias G."/>
            <person name="Krishnan S.P."/>
            <person name="Kruger A."/>
            <person name="Kummerfeld S.K."/>
            <person name="Kurochkin I.V."/>
            <person name="Lareau L.F."/>
            <person name="Lazarevic D."/>
            <person name="Lipovich L."/>
            <person name="Liu J."/>
            <person name="Liuni S."/>
            <person name="McWilliam S."/>
            <person name="Madan Babu M."/>
            <person name="Madera M."/>
            <person name="Marchionni L."/>
            <person name="Matsuda H."/>
            <person name="Matsuzawa S."/>
            <person name="Miki H."/>
            <person name="Mignone F."/>
            <person name="Miyake S."/>
            <person name="Morris K."/>
            <person name="Mottagui-Tabar S."/>
            <person name="Mulder N."/>
            <person name="Nakano N."/>
            <person name="Nakauchi H."/>
            <person name="Ng P."/>
            <person name="Nilsson R."/>
            <person name="Nishiguchi S."/>
            <person name="Nishikawa S."/>
            <person name="Nori F."/>
            <person name="Ohara O."/>
            <person name="Okazaki Y."/>
            <person name="Orlando V."/>
            <person name="Pang K.C."/>
            <person name="Pavan W.J."/>
            <person name="Pavesi G."/>
            <person name="Pesole G."/>
            <person name="Petrovsky N."/>
            <person name="Piazza S."/>
            <person name="Reed J."/>
            <person name="Reid J.F."/>
            <person name="Ring B.Z."/>
            <person name="Ringwald M."/>
            <person name="Rost B."/>
            <person name="Ruan Y."/>
            <person name="Salzberg S.L."/>
            <person name="Sandelin A."/>
            <person name="Schneider C."/>
            <person name="Schoenbach C."/>
            <person name="Sekiguchi K."/>
            <person name="Semple C.A."/>
            <person name="Seno S."/>
            <person name="Sessa L."/>
            <person name="Sheng Y."/>
            <person name="Shibata Y."/>
            <person name="Shimada H."/>
            <person name="Shimada K."/>
            <person name="Silva D."/>
            <person name="Sinclair B."/>
            <person name="Sperling S."/>
            <person name="Stupka E."/>
            <person name="Sugiura K."/>
            <person name="Sultana R."/>
            <person name="Takenaka Y."/>
            <person name="Taki K."/>
            <person name="Tammoja K."/>
            <person name="Tan S.L."/>
            <person name="Tang S."/>
            <person name="Taylor M.S."/>
            <person name="Tegner J."/>
            <person name="Teichmann S.A."/>
            <person name="Ueda H.R."/>
            <person name="van Nimwegen E."/>
            <person name="Verardo R."/>
            <person name="Wei C.L."/>
            <person name="Yagi K."/>
            <person name="Yamanishi H."/>
            <person name="Zabarovsky E."/>
            <person name="Zhu S."/>
            <person name="Zimmer A."/>
            <person name="Hide W."/>
            <person name="Bult C."/>
            <person name="Grimmond S.M."/>
            <person name="Teasdale R.D."/>
            <person name="Liu E.T."/>
            <person name="Brusic V."/>
            <person name="Quackenbush J."/>
            <person name="Wahlestedt C."/>
            <person name="Mattick J.S."/>
            <person name="Hume D.A."/>
            <person name="Kai C."/>
            <person name="Sasaki D."/>
            <person name="Tomaru Y."/>
            <person name="Fukuda S."/>
            <person name="Kanamori-Katayama M."/>
            <person name="Suzuki M."/>
            <person name="Aoki J."/>
            <person name="Arakawa T."/>
            <person name="Iida J."/>
            <person name="Imamura K."/>
            <person name="Itoh M."/>
            <person name="Kato T."/>
            <person name="Kawaji H."/>
            <person name="Kawagashira N."/>
            <person name="Kawashima T."/>
            <person name="Kojima M."/>
            <person name="Kondo S."/>
            <person name="Konno H."/>
            <person name="Nakano K."/>
            <person name="Ninomiya N."/>
            <person name="Nishio T."/>
            <person name="Okada M."/>
            <person name="Plessy C."/>
            <person name="Shibata K."/>
            <person name="Shiraki T."/>
            <person name="Suzuki S."/>
            <person name="Tagami M."/>
            <person name="Waki K."/>
            <person name="Watahiki A."/>
            <person name="Okamura-Oho Y."/>
            <person name="Suzuki H."/>
            <person name="Kawai J."/>
            <person name="Hayashizaki Y."/>
        </authorList>
    </citation>
    <scope>NUCLEOTIDE SEQUENCE [LARGE SCALE MRNA]</scope>
    <source>
        <strain>C57BL/6J</strain>
        <tissue>Heart</tissue>
    </source>
</reference>
<reference key="3">
    <citation type="journal article" date="2004" name="Genome Res.">
        <title>The status, quality, and expansion of the NIH full-length cDNA project: the Mammalian Gene Collection (MGC).</title>
        <authorList>
            <consortium name="The MGC Project Team"/>
        </authorList>
    </citation>
    <scope>NUCLEOTIDE SEQUENCE [LARGE SCALE MRNA]</scope>
    <source>
        <strain>C57BL/6J</strain>
        <tissue>Brain</tissue>
    </source>
</reference>
<reference key="4">
    <citation type="journal article" date="2010" name="Cell">
        <title>A tissue-specific atlas of mouse protein phosphorylation and expression.</title>
        <authorList>
            <person name="Huttlin E.L."/>
            <person name="Jedrychowski M.P."/>
            <person name="Elias J.E."/>
            <person name="Goswami T."/>
            <person name="Rad R."/>
            <person name="Beausoleil S.A."/>
            <person name="Villen J."/>
            <person name="Haas W."/>
            <person name="Sowa M.E."/>
            <person name="Gygi S.P."/>
        </authorList>
    </citation>
    <scope>IDENTIFICATION BY MASS SPECTROMETRY [LARGE SCALE ANALYSIS]</scope>
    <source>
        <tissue>Brain</tissue>
        <tissue>Heart</tissue>
        <tissue>Lung</tissue>
    </source>
</reference>
<reference key="5">
    <citation type="journal article" date="2014" name="Mol. Cell. Proteomics">
        <title>Immunoaffinity enrichment and mass spectrometry analysis of protein methylation.</title>
        <authorList>
            <person name="Guo A."/>
            <person name="Gu H."/>
            <person name="Zhou J."/>
            <person name="Mulhern D."/>
            <person name="Wang Y."/>
            <person name="Lee K.A."/>
            <person name="Yang V."/>
            <person name="Aguiar M."/>
            <person name="Kornhauser J."/>
            <person name="Jia X."/>
            <person name="Ren J."/>
            <person name="Beausoleil S.A."/>
            <person name="Silva J.C."/>
            <person name="Vemulapalli V."/>
            <person name="Bedford M.T."/>
            <person name="Comb M.J."/>
        </authorList>
    </citation>
    <scope>METHYLATION [LARGE SCALE ANALYSIS] AT ARG-27</scope>
    <scope>IDENTIFICATION BY MASS SPECTROMETRY [LARGE SCALE ANALYSIS]</scope>
    <source>
        <tissue>Brain</tissue>
    </source>
</reference>
<accession>Q8R4S0</accession>
<feature type="initiator methionine" description="Removed" evidence="2">
    <location>
        <position position="1"/>
    </location>
</feature>
<feature type="chain" id="PRO_0000071495" description="Protein phosphatase 1 regulatory subunit 14C">
    <location>
        <begin position="2"/>
        <end position="164"/>
    </location>
</feature>
<feature type="region of interest" description="Disordered" evidence="3">
    <location>
        <begin position="1"/>
        <end position="70"/>
    </location>
</feature>
<feature type="compositionally biased region" description="Gly residues" evidence="3">
    <location>
        <begin position="1"/>
        <end position="19"/>
    </location>
</feature>
<feature type="compositionally biased region" description="Low complexity" evidence="3">
    <location>
        <begin position="50"/>
        <end position="62"/>
    </location>
</feature>
<feature type="modified residue" description="N-acetylserine" evidence="2">
    <location>
        <position position="2"/>
    </location>
</feature>
<feature type="modified residue" description="Phosphoserine" evidence="2">
    <location>
        <position position="25"/>
    </location>
</feature>
<feature type="modified residue" description="Omega-N-methylarginine" evidence="6">
    <location>
        <position position="27"/>
    </location>
</feature>
<feature type="modified residue" description="Phosphoserine" evidence="2">
    <location>
        <position position="33"/>
    </location>
</feature>
<feature type="modified residue" description="Phosphothreonine; by ILK1" evidence="2">
    <location>
        <position position="72"/>
    </location>
</feature>
<keyword id="KW-0007">Acetylation</keyword>
<keyword id="KW-0472">Membrane</keyword>
<keyword id="KW-0488">Methylation</keyword>
<keyword id="KW-0597">Phosphoprotein</keyword>
<keyword id="KW-0650">Protein phosphatase inhibitor</keyword>
<keyword id="KW-1185">Reference proteome</keyword>
<sequence length="164" mass="17754">MSVVTGGGEAAGGGGGGGARVFFQSPRGGTGGSPGSSSSSGSSREDSAPVTTVAAAGQVQQQQRRHQQGKVTVKYDRKELRKRLVLEEWIVEQLGQLYGCEEEEMPDVEIDIDDLLDANSEEERASKLQEALVDCYKPTEEFIRELLSRIRGMRKLSPPQKKSV</sequence>
<organism>
    <name type="scientific">Mus musculus</name>
    <name type="common">Mouse</name>
    <dbReference type="NCBI Taxonomy" id="10090"/>
    <lineage>
        <taxon>Eukaryota</taxon>
        <taxon>Metazoa</taxon>
        <taxon>Chordata</taxon>
        <taxon>Craniata</taxon>
        <taxon>Vertebrata</taxon>
        <taxon>Euteleostomi</taxon>
        <taxon>Mammalia</taxon>
        <taxon>Eutheria</taxon>
        <taxon>Euarchontoglires</taxon>
        <taxon>Glires</taxon>
        <taxon>Rodentia</taxon>
        <taxon>Myomorpha</taxon>
        <taxon>Muroidea</taxon>
        <taxon>Muridae</taxon>
        <taxon>Murinae</taxon>
        <taxon>Mus</taxon>
        <taxon>Mus</taxon>
    </lineage>
</organism>
<comment type="function">
    <text evidence="4">Inhibitor of the PP1 regulatory subunit PPP1CA.</text>
</comment>
<comment type="subcellular location">
    <subcellularLocation>
        <location evidence="4">Endomembrane system</location>
        <topology evidence="4">Peripheral membrane protein</topology>
    </subcellularLocation>
</comment>
<comment type="tissue specificity">
    <text evidence="4">Detected in heart, muscle, spinal cord, hippocampus, hypothalamus, thalamus, midbrain, brain stem, cerebellum, brain cortex and olfactory bulb.</text>
</comment>
<comment type="induction">
    <text evidence="4">Up-regulated by morphine.</text>
</comment>
<comment type="PTM">
    <text evidence="1 4">The main inhibitory site appears to be Thr-72 (By similarity). Has over 600-fold higher inhibitory activity when phosphorylated, creating a molecular switch for regulating the phosphorylation status of PPP1CA substrates and smooth muscle contraction.</text>
</comment>
<comment type="similarity">
    <text evidence="5">Belongs to the PP1 inhibitor family.</text>
</comment>
<evidence type="ECO:0000250" key="1"/>
<evidence type="ECO:0000250" key="2">
    <source>
        <dbReference type="UniProtKB" id="Q8TAE6"/>
    </source>
</evidence>
<evidence type="ECO:0000256" key="3">
    <source>
        <dbReference type="SAM" id="MobiDB-lite"/>
    </source>
</evidence>
<evidence type="ECO:0000269" key="4">
    <source>
    </source>
</evidence>
<evidence type="ECO:0000305" key="5"/>
<evidence type="ECO:0007744" key="6">
    <source>
    </source>
</evidence>
<dbReference type="EMBL" id="AF407167">
    <property type="protein sequence ID" value="AAL83508.1"/>
    <property type="molecule type" value="mRNA"/>
</dbReference>
<dbReference type="EMBL" id="AK085997">
    <property type="protein sequence ID" value="BAC39589.1"/>
    <property type="molecule type" value="mRNA"/>
</dbReference>
<dbReference type="EMBL" id="BC055717">
    <property type="protein sequence ID" value="AAH55717.1"/>
    <property type="molecule type" value="mRNA"/>
</dbReference>
<dbReference type="CCDS" id="CCDS56669.1"/>
<dbReference type="RefSeq" id="NP_597844.1">
    <property type="nucleotide sequence ID" value="NM_133485.2"/>
</dbReference>
<dbReference type="FunCoup" id="Q8R4S0">
    <property type="interactions" value="308"/>
</dbReference>
<dbReference type="STRING" id="10090.ENSMUSP00000045110"/>
<dbReference type="GlyGen" id="Q8R4S0">
    <property type="glycosylation" value="2 sites, 1 O-linked glycan (2 sites)"/>
</dbReference>
<dbReference type="iPTMnet" id="Q8R4S0"/>
<dbReference type="PhosphoSitePlus" id="Q8R4S0"/>
<dbReference type="jPOST" id="Q8R4S0"/>
<dbReference type="PaxDb" id="10090-ENSMUSP00000045110"/>
<dbReference type="PeptideAtlas" id="Q8R4S0"/>
<dbReference type="ProteomicsDB" id="289782"/>
<dbReference type="Antibodypedia" id="54632">
    <property type="antibodies" value="107 antibodies from 24 providers"/>
</dbReference>
<dbReference type="Ensembl" id="ENSMUST00000043374.7">
    <property type="protein sequence ID" value="ENSMUSP00000045110.6"/>
    <property type="gene ID" value="ENSMUSG00000040653.7"/>
</dbReference>
<dbReference type="GeneID" id="76142"/>
<dbReference type="KEGG" id="mmu:76142"/>
<dbReference type="UCSC" id="uc007ehq.1">
    <property type="organism name" value="mouse"/>
</dbReference>
<dbReference type="AGR" id="MGI:1923392"/>
<dbReference type="CTD" id="81706"/>
<dbReference type="MGI" id="MGI:1923392">
    <property type="gene designation" value="Ppp1r14c"/>
</dbReference>
<dbReference type="VEuPathDB" id="HostDB:ENSMUSG00000040653"/>
<dbReference type="eggNOG" id="ENOG502RYQF">
    <property type="taxonomic scope" value="Eukaryota"/>
</dbReference>
<dbReference type="GeneTree" id="ENSGT00950000182985"/>
<dbReference type="HOGENOM" id="CLU_114155_1_0_1"/>
<dbReference type="InParanoid" id="Q8R4S0"/>
<dbReference type="OMA" id="PARVFFQ"/>
<dbReference type="OrthoDB" id="8193882at2759"/>
<dbReference type="PhylomeDB" id="Q8R4S0"/>
<dbReference type="TreeFam" id="TF105546"/>
<dbReference type="BioGRID-ORCS" id="76142">
    <property type="hits" value="0 hits in 78 CRISPR screens"/>
</dbReference>
<dbReference type="ChiTaRS" id="Ppp1r14c">
    <property type="organism name" value="mouse"/>
</dbReference>
<dbReference type="PRO" id="PR:Q8R4S0"/>
<dbReference type="Proteomes" id="UP000000589">
    <property type="component" value="Chromosome 10"/>
</dbReference>
<dbReference type="RNAct" id="Q8R4S0">
    <property type="molecule type" value="protein"/>
</dbReference>
<dbReference type="Bgee" id="ENSMUSG00000040653">
    <property type="expression patterns" value="Expressed in interventricular septum and 62 other cell types or tissues"/>
</dbReference>
<dbReference type="ExpressionAtlas" id="Q8R4S0">
    <property type="expression patterns" value="baseline and differential"/>
</dbReference>
<dbReference type="GO" id="GO:0005737">
    <property type="term" value="C:cytoplasm"/>
    <property type="evidence" value="ECO:0007669"/>
    <property type="project" value="InterPro"/>
</dbReference>
<dbReference type="GO" id="GO:0012505">
    <property type="term" value="C:endomembrane system"/>
    <property type="evidence" value="ECO:0007669"/>
    <property type="project" value="UniProtKB-SubCell"/>
</dbReference>
<dbReference type="GO" id="GO:0016020">
    <property type="term" value="C:membrane"/>
    <property type="evidence" value="ECO:0000266"/>
    <property type="project" value="MGI"/>
</dbReference>
<dbReference type="GO" id="GO:0004865">
    <property type="term" value="F:protein serine/threonine phosphatase inhibitor activity"/>
    <property type="evidence" value="ECO:0000314"/>
    <property type="project" value="MGI"/>
</dbReference>
<dbReference type="GO" id="GO:0007165">
    <property type="term" value="P:signal transduction"/>
    <property type="evidence" value="ECO:0000304"/>
    <property type="project" value="MGI"/>
</dbReference>
<dbReference type="FunFam" id="1.10.150.220:FF:000001">
    <property type="entry name" value="Phosphatase 1, regulatory (Inhibitor) subunit 14C"/>
    <property type="match status" value="1"/>
</dbReference>
<dbReference type="Gene3D" id="1.10.150.220">
    <property type="entry name" value="CPI-17"/>
    <property type="match status" value="1"/>
</dbReference>
<dbReference type="InterPro" id="IPR008025">
    <property type="entry name" value="CPI-17"/>
</dbReference>
<dbReference type="InterPro" id="IPR036658">
    <property type="entry name" value="CPI-17_sf"/>
</dbReference>
<dbReference type="PANTHER" id="PTHR16188">
    <property type="entry name" value="PROTEIN PHOSPHATASE 1 INHIBITOR POTENTIATED BY PROTEIN KINASE C"/>
    <property type="match status" value="1"/>
</dbReference>
<dbReference type="PANTHER" id="PTHR16188:SF6">
    <property type="entry name" value="PROTEIN PHOSPHATASE 1 REGULATORY SUBUNIT 14C"/>
    <property type="match status" value="1"/>
</dbReference>
<dbReference type="Pfam" id="PF05361">
    <property type="entry name" value="PP1_inhibitor"/>
    <property type="match status" value="1"/>
</dbReference>
<dbReference type="SUPFAM" id="SSF81790">
    <property type="entry name" value="Myosin phosphatase inhibitor 17kDa protein, CPI-17"/>
    <property type="match status" value="1"/>
</dbReference>